<evidence type="ECO:0000250" key="1"/>
<evidence type="ECO:0000250" key="2">
    <source>
        <dbReference type="UniProtKB" id="P21399"/>
    </source>
</evidence>
<evidence type="ECO:0000269" key="3">
    <source>
    </source>
</evidence>
<evidence type="ECO:0000305" key="4"/>
<evidence type="ECO:0007829" key="5">
    <source>
        <dbReference type="PDB" id="3SN2"/>
    </source>
</evidence>
<evidence type="ECO:0007829" key="6">
    <source>
        <dbReference type="PDB" id="3SNP"/>
    </source>
</evidence>
<feature type="chain" id="PRO_0000076682" description="Cytoplasmic aconitate hydratase">
    <location>
        <begin position="1"/>
        <end position="889"/>
    </location>
</feature>
<feature type="binding site" evidence="1">
    <location>
        <position position="86"/>
    </location>
    <ligand>
        <name>substrate</name>
    </ligand>
</feature>
<feature type="binding site" evidence="1">
    <location>
        <begin position="205"/>
        <end position="207"/>
    </location>
    <ligand>
        <name>substrate</name>
    </ligand>
</feature>
<feature type="binding site" evidence="1">
    <location>
        <position position="437"/>
    </location>
    <ligand>
        <name>[4Fe-4S] cluster</name>
        <dbReference type="ChEBI" id="CHEBI:49883"/>
    </ligand>
</feature>
<feature type="binding site" evidence="1">
    <location>
        <position position="503"/>
    </location>
    <ligand>
        <name>[4Fe-4S] cluster</name>
        <dbReference type="ChEBI" id="CHEBI:49883"/>
    </ligand>
</feature>
<feature type="binding site" evidence="1">
    <location>
        <position position="506"/>
    </location>
    <ligand>
        <name>[4Fe-4S] cluster</name>
        <dbReference type="ChEBI" id="CHEBI:49883"/>
    </ligand>
</feature>
<feature type="binding site" evidence="1">
    <location>
        <position position="536"/>
    </location>
    <ligand>
        <name>substrate</name>
    </ligand>
</feature>
<feature type="binding site" evidence="1">
    <location>
        <position position="541"/>
    </location>
    <ligand>
        <name>substrate</name>
    </ligand>
</feature>
<feature type="binding site" evidence="1">
    <location>
        <position position="699"/>
    </location>
    <ligand>
        <name>substrate</name>
    </ligand>
</feature>
<feature type="binding site" evidence="1">
    <location>
        <begin position="779"/>
        <end position="780"/>
    </location>
    <ligand>
        <name>substrate</name>
    </ligand>
</feature>
<feature type="helix" evidence="6">
    <location>
        <begin position="6"/>
        <end position="8"/>
    </location>
</feature>
<feature type="strand" evidence="6">
    <location>
        <begin position="9"/>
        <end position="13"/>
    </location>
</feature>
<feature type="strand" evidence="6">
    <location>
        <begin position="20"/>
        <end position="22"/>
    </location>
</feature>
<feature type="helix" evidence="6">
    <location>
        <begin position="24"/>
        <end position="32"/>
    </location>
</feature>
<feature type="helix" evidence="6">
    <location>
        <begin position="37"/>
        <end position="48"/>
    </location>
</feature>
<feature type="strand" evidence="6">
    <location>
        <begin position="52"/>
        <end position="55"/>
    </location>
</feature>
<feature type="helix" evidence="6">
    <location>
        <begin position="57"/>
        <end position="64"/>
    </location>
</feature>
<feature type="helix" evidence="6">
    <location>
        <begin position="66"/>
        <end position="69"/>
    </location>
</feature>
<feature type="turn" evidence="6">
    <location>
        <begin position="70"/>
        <end position="73"/>
    </location>
</feature>
<feature type="strand" evidence="6">
    <location>
        <begin position="75"/>
        <end position="78"/>
    </location>
</feature>
<feature type="strand" evidence="6">
    <location>
        <begin position="81"/>
        <end position="86"/>
    </location>
</feature>
<feature type="turn" evidence="6">
    <location>
        <begin position="87"/>
        <end position="90"/>
    </location>
</feature>
<feature type="helix" evidence="6">
    <location>
        <begin position="91"/>
        <end position="105"/>
    </location>
</feature>
<feature type="turn" evidence="6">
    <location>
        <begin position="106"/>
        <end position="108"/>
    </location>
</feature>
<feature type="helix" evidence="6">
    <location>
        <begin position="111"/>
        <end position="113"/>
    </location>
</feature>
<feature type="strand" evidence="6">
    <location>
        <begin position="120"/>
        <end position="123"/>
    </location>
</feature>
<feature type="helix" evidence="6">
    <location>
        <begin position="147"/>
        <end position="163"/>
    </location>
</feature>
<feature type="strand" evidence="6">
    <location>
        <begin position="167"/>
        <end position="170"/>
    </location>
</feature>
<feature type="strand" evidence="6">
    <location>
        <begin position="172"/>
        <end position="174"/>
    </location>
</feature>
<feature type="helix" evidence="6">
    <location>
        <begin position="178"/>
        <end position="184"/>
    </location>
</feature>
<feature type="strand" evidence="6">
    <location>
        <begin position="188"/>
        <end position="192"/>
    </location>
</feature>
<feature type="strand" evidence="6">
    <location>
        <begin position="195"/>
        <end position="198"/>
    </location>
</feature>
<feature type="strand" evidence="6">
    <location>
        <begin position="200"/>
        <end position="204"/>
    </location>
</feature>
<feature type="helix" evidence="6">
    <location>
        <begin position="206"/>
        <end position="214"/>
    </location>
</feature>
<feature type="strand" evidence="6">
    <location>
        <begin position="217"/>
        <end position="220"/>
    </location>
</feature>
<feature type="helix" evidence="6">
    <location>
        <begin position="223"/>
        <end position="230"/>
    </location>
</feature>
<feature type="strand" evidence="6">
    <location>
        <begin position="235"/>
        <end position="238"/>
    </location>
</feature>
<feature type="strand" evidence="6">
    <location>
        <begin position="242"/>
        <end position="249"/>
    </location>
</feature>
<feature type="helix" evidence="6">
    <location>
        <begin position="257"/>
        <end position="271"/>
    </location>
</feature>
<feature type="strand" evidence="6">
    <location>
        <begin position="276"/>
        <end position="282"/>
    </location>
</feature>
<feature type="helix" evidence="6">
    <location>
        <begin position="283"/>
        <end position="287"/>
    </location>
</feature>
<feature type="helix" evidence="6">
    <location>
        <begin position="290"/>
        <end position="298"/>
    </location>
</feature>
<feature type="helix" evidence="6">
    <location>
        <begin position="300"/>
        <end position="303"/>
    </location>
</feature>
<feature type="strand" evidence="6">
    <location>
        <begin position="306"/>
        <end position="309"/>
    </location>
</feature>
<feature type="helix" evidence="6">
    <location>
        <begin position="314"/>
        <end position="322"/>
    </location>
</feature>
<feature type="helix" evidence="6">
    <location>
        <begin position="327"/>
        <end position="339"/>
    </location>
</feature>
<feature type="helix" evidence="6">
    <location>
        <begin position="349"/>
        <end position="351"/>
    </location>
</feature>
<feature type="strand" evidence="6">
    <location>
        <begin position="356"/>
        <end position="362"/>
    </location>
</feature>
<feature type="helix" evidence="6">
    <location>
        <begin position="363"/>
        <end position="365"/>
    </location>
</feature>
<feature type="strand" evidence="6">
    <location>
        <begin position="369"/>
        <end position="371"/>
    </location>
</feature>
<feature type="strand" evidence="6">
    <location>
        <begin position="379"/>
        <end position="381"/>
    </location>
</feature>
<feature type="helix" evidence="6">
    <location>
        <begin position="382"/>
        <end position="384"/>
    </location>
</feature>
<feature type="helix" evidence="6">
    <location>
        <begin position="385"/>
        <end position="394"/>
    </location>
</feature>
<feature type="helix" evidence="6">
    <location>
        <begin position="408"/>
        <end position="410"/>
    </location>
</feature>
<feature type="strand" evidence="6">
    <location>
        <begin position="412"/>
        <end position="419"/>
    </location>
</feature>
<feature type="strand" evidence="6">
    <location>
        <begin position="421"/>
        <end position="425"/>
    </location>
</feature>
<feature type="strand" evidence="6">
    <location>
        <begin position="428"/>
        <end position="435"/>
    </location>
</feature>
<feature type="helix" evidence="6">
    <location>
        <begin position="442"/>
        <end position="458"/>
    </location>
</feature>
<feature type="strand" evidence="6">
    <location>
        <begin position="467"/>
        <end position="472"/>
    </location>
</feature>
<feature type="helix" evidence="6">
    <location>
        <begin position="477"/>
        <end position="483"/>
    </location>
</feature>
<feature type="turn" evidence="6">
    <location>
        <begin position="484"/>
        <end position="486"/>
    </location>
</feature>
<feature type="helix" evidence="6">
    <location>
        <begin position="488"/>
        <end position="493"/>
    </location>
</feature>
<feature type="helix" evidence="6">
    <location>
        <begin position="515"/>
        <end position="523"/>
    </location>
</feature>
<feature type="strand" evidence="6">
    <location>
        <begin position="529"/>
        <end position="533"/>
    </location>
</feature>
<feature type="helix" evidence="6">
    <location>
        <begin position="539"/>
        <end position="541"/>
    </location>
</feature>
<feature type="strand" evidence="6">
    <location>
        <begin position="547"/>
        <end position="551"/>
    </location>
</feature>
<feature type="helix" evidence="6">
    <location>
        <begin position="554"/>
        <end position="563"/>
    </location>
</feature>
<feature type="strand" evidence="6">
    <location>
        <begin position="564"/>
        <end position="567"/>
    </location>
</feature>
<feature type="turn" evidence="5">
    <location>
        <begin position="570"/>
        <end position="572"/>
    </location>
</feature>
<feature type="strand" evidence="6">
    <location>
        <begin position="575"/>
        <end position="577"/>
    </location>
</feature>
<feature type="strand" evidence="6">
    <location>
        <begin position="579"/>
        <end position="584"/>
    </location>
</feature>
<feature type="helix" evidence="6">
    <location>
        <begin position="586"/>
        <end position="589"/>
    </location>
</feature>
<feature type="helix" evidence="6">
    <location>
        <begin position="593"/>
        <end position="602"/>
    </location>
</feature>
<feature type="helix" evidence="6">
    <location>
        <begin position="604"/>
        <end position="617"/>
    </location>
</feature>
<feature type="turn" evidence="6">
    <location>
        <begin position="618"/>
        <end position="621"/>
    </location>
</feature>
<feature type="helix" evidence="6">
    <location>
        <begin position="647"/>
        <end position="649"/>
    </location>
</feature>
<feature type="strand" evidence="6">
    <location>
        <begin position="662"/>
        <end position="670"/>
    </location>
</feature>
<feature type="helix" evidence="6">
    <location>
        <begin position="677"/>
        <end position="680"/>
    </location>
</feature>
<feature type="helix" evidence="6">
    <location>
        <begin position="691"/>
        <end position="697"/>
    </location>
</feature>
<feature type="turn" evidence="6">
    <location>
        <begin position="698"/>
        <end position="700"/>
    </location>
</feature>
<feature type="helix" evidence="6">
    <location>
        <begin position="703"/>
        <end position="705"/>
    </location>
</feature>
<feature type="helix" evidence="6">
    <location>
        <begin position="710"/>
        <end position="712"/>
    </location>
</feature>
<feature type="helix" evidence="6">
    <location>
        <begin position="716"/>
        <end position="722"/>
    </location>
</feature>
<feature type="turn" evidence="6">
    <location>
        <begin position="732"/>
        <end position="734"/>
    </location>
</feature>
<feature type="strand" evidence="6">
    <location>
        <begin position="735"/>
        <end position="737"/>
    </location>
</feature>
<feature type="strand" evidence="6">
    <location>
        <begin position="739"/>
        <end position="742"/>
    </location>
</feature>
<feature type="turn" evidence="6">
    <location>
        <begin position="744"/>
        <end position="746"/>
    </location>
</feature>
<feature type="strand" evidence="6">
    <location>
        <begin position="749"/>
        <end position="751"/>
    </location>
</feature>
<feature type="helix" evidence="6">
    <location>
        <begin position="752"/>
        <end position="761"/>
    </location>
</feature>
<feature type="strand" evidence="6">
    <location>
        <begin position="766"/>
        <end position="770"/>
    </location>
</feature>
<feature type="strand" evidence="6">
    <location>
        <begin position="772"/>
        <end position="774"/>
    </location>
</feature>
<feature type="strand" evidence="6">
    <location>
        <begin position="776"/>
        <end position="778"/>
    </location>
</feature>
<feature type="turn" evidence="6">
    <location>
        <begin position="781"/>
        <end position="784"/>
    </location>
</feature>
<feature type="helix" evidence="6">
    <location>
        <begin position="785"/>
        <end position="789"/>
    </location>
</feature>
<feature type="strand" evidence="6">
    <location>
        <begin position="792"/>
        <end position="798"/>
    </location>
</feature>
<feature type="helix" evidence="6">
    <location>
        <begin position="802"/>
        <end position="810"/>
    </location>
</feature>
<feature type="strand" evidence="6">
    <location>
        <begin position="814"/>
        <end position="817"/>
    </location>
</feature>
<feature type="helix" evidence="6">
    <location>
        <begin position="824"/>
        <end position="827"/>
    </location>
</feature>
<feature type="strand" evidence="6">
    <location>
        <begin position="835"/>
        <end position="837"/>
    </location>
</feature>
<feature type="strand" evidence="6">
    <location>
        <begin position="848"/>
        <end position="853"/>
    </location>
</feature>
<feature type="strand" evidence="6">
    <location>
        <begin position="858"/>
        <end position="863"/>
    </location>
</feature>
<feature type="helix" evidence="6">
    <location>
        <begin position="868"/>
        <end position="876"/>
    </location>
</feature>
<feature type="helix" evidence="6">
    <location>
        <begin position="879"/>
        <end position="887"/>
    </location>
</feature>
<comment type="function">
    <text evidence="2 3">Bifunctional iron sensor that switches between 2 activities depending on iron availability (By similarity). Iron deprivation, promotes its mRNA binding activity through which it regulates the expression of genes involved in iron uptake, sequestration and utilization (PubMed:17185597). Binds to iron-responsive elements (IRES) in the untranslated region of target mRNAs preventing for instance the translation of ferritin and aminolevulinic acid synthase and stabilizing the transferrin receptor mRNA (PubMed:17185597).</text>
</comment>
<comment type="function">
    <text evidence="2">Conversely, when cellular iron levels are high, binds a 4Fe-4S cluster which precludes RNA binding activity and promotes the aconitase activity, the isomerization of citrate to isocitrate via cis-aconitate.</text>
</comment>
<comment type="catalytic activity">
    <reaction evidence="2">
        <text>citrate = D-threo-isocitrate</text>
        <dbReference type="Rhea" id="RHEA:10336"/>
        <dbReference type="ChEBI" id="CHEBI:15562"/>
        <dbReference type="ChEBI" id="CHEBI:16947"/>
        <dbReference type="EC" id="4.2.1.3"/>
    </reaction>
</comment>
<comment type="cofactor">
    <cofactor evidence="2">
        <name>[4Fe-4S] cluster</name>
        <dbReference type="ChEBI" id="CHEBI:49883"/>
    </cofactor>
    <text evidence="2">Binds 1 [4Fe-4S] cluster per subunit.</text>
</comment>
<comment type="subunit">
    <text evidence="2">Interacts (when associated with the 4Fe-4S) with FBXL5. Interacts with frataxin(81-210).</text>
</comment>
<comment type="subcellular location">
    <subcellularLocation>
        <location evidence="2">Cytoplasm</location>
        <location evidence="2">Cytosol</location>
    </subcellularLocation>
</comment>
<comment type="similarity">
    <text evidence="4">Belongs to the aconitase/IPM isomerase family.</text>
</comment>
<organism>
    <name type="scientific">Oryctolagus cuniculus</name>
    <name type="common">Rabbit</name>
    <dbReference type="NCBI Taxonomy" id="9986"/>
    <lineage>
        <taxon>Eukaryota</taxon>
        <taxon>Metazoa</taxon>
        <taxon>Chordata</taxon>
        <taxon>Craniata</taxon>
        <taxon>Vertebrata</taxon>
        <taxon>Euteleostomi</taxon>
        <taxon>Mammalia</taxon>
        <taxon>Eutheria</taxon>
        <taxon>Euarchontoglires</taxon>
        <taxon>Glires</taxon>
        <taxon>Lagomorpha</taxon>
        <taxon>Leporidae</taxon>
        <taxon>Oryctolagus</taxon>
    </lineage>
</organism>
<protein>
    <recommendedName>
        <fullName evidence="4">Cytoplasmic aconitate hydratase</fullName>
        <shortName>Aconitase</shortName>
        <ecNumber evidence="2">4.2.1.3</ecNumber>
    </recommendedName>
    <alternativeName>
        <fullName>Citrate hydro-lyase</fullName>
    </alternativeName>
    <alternativeName>
        <fullName>Ferritin repressor protein</fullName>
    </alternativeName>
    <alternativeName>
        <fullName>Iron regulatory protein 1</fullName>
        <shortName>IRP1</shortName>
    </alternativeName>
    <alternativeName>
        <fullName>Iron-responsive element-binding protein 1</fullName>
        <shortName>IRE-BP 1</shortName>
    </alternativeName>
</protein>
<gene>
    <name type="primary">ACO1</name>
    <name type="synonym">FRP</name>
    <name type="synonym">IREB1</name>
    <name type="synonym">IREBP</name>
</gene>
<sequence>MSNPFAYLAEPLDPAQPGKKFFNLNKLDYSRYGRLPFSIRVLLEAAVRNCDKFLVKKEDIENILNWNVTQHMNIEVPFKPARVILQDFTGVPSVVDFAAMRDAVKKLGGDPEKINPICPVDLVIDHSIQVDFNRRADSLQKNQDLEFERNRERFEFLKWGSKAFRNMRIIPPGSGIIHQVNLEYLARVVFDQDGYYYPDSLVGTDSHTTMIDGLGVLGWGVGGIEAEAVMLGQPISMVLPQVIGYRLMGKPHPLVTSTDIVLTITKHLRQVGVVGKFVEFFGLGVAQLSIADRATIANMCPEYGATATFFPVDEVSIKYLVQTGRDESKVKQIRKYLQAVGMFRDYSDPSQDPDFTQVVELDLKTVVPCCSGPKRPQDKVAVSDMKKDFESCLGAKQGFKGFQVAPDHHNDHKTFIYNDSEFTLSHGSVVIAAITSCTNTSNPSVMLGAGLLAKKAVDAGLNVKPYVKTSLSPGSGVVTYYLRESGVMPYLSQLGFDVVGYGCMTCIGNSGPLPEPVVEAITQGDLVAVGVLSGNRNFEGRVHPNTRANYLASPPLVIAYAIAGTIRIDFEKEPLGTNAKGQQVFLRDIWPTREEIQAVERQYVIPGMFTEVYQKIETVNASWNALAAPSDKLYLWNPKSTYIKSPPFFENLTLDLQPPKSIVDAYVLLNLGDSVTTDHISPAGNIARNSPAARYLTNRGLTPREFNSYGSRRGNDAIMARGTFANIRLLNRFLNKQAPQTIHLPSGETLDVFDAAERYQQEGHPLIVLAGKEYGSGSSRDWAAKGPFLLGIKAVLAESYERIHRSNLVGMGVIPLEYLPGENADSLGLTGRERYTIIIPENLTPRMHVQVKLDTGKTFQAVIRFDTDVELTYLHNGGILNYMIRKMAK</sequence>
<dbReference type="EC" id="4.2.1.3" evidence="2"/>
<dbReference type="EMBL" id="M95815">
    <property type="protein sequence ID" value="AAA31255.1"/>
    <property type="molecule type" value="mRNA"/>
</dbReference>
<dbReference type="PIR" id="A44153">
    <property type="entry name" value="A44153"/>
</dbReference>
<dbReference type="RefSeq" id="NP_001075784.1">
    <property type="nucleotide sequence ID" value="NM_001082315.1"/>
</dbReference>
<dbReference type="PDB" id="3SN2">
    <property type="method" value="X-ray"/>
    <property type="resolution" value="2.99 A"/>
    <property type="chains" value="A=2-889"/>
</dbReference>
<dbReference type="PDB" id="3SNP">
    <property type="method" value="X-ray"/>
    <property type="resolution" value="2.80 A"/>
    <property type="chains" value="A/B=2-889"/>
</dbReference>
<dbReference type="PDBsum" id="3SN2"/>
<dbReference type="PDBsum" id="3SNP"/>
<dbReference type="SMR" id="Q01059"/>
<dbReference type="FunCoup" id="Q01059">
    <property type="interactions" value="1581"/>
</dbReference>
<dbReference type="STRING" id="9986.ENSOCUP00000042092"/>
<dbReference type="iPTMnet" id="Q01059"/>
<dbReference type="PaxDb" id="9986-ENSOCUP00000013749"/>
<dbReference type="GeneID" id="100009154"/>
<dbReference type="KEGG" id="ocu:100009154"/>
<dbReference type="CTD" id="48"/>
<dbReference type="eggNOG" id="KOG0452">
    <property type="taxonomic scope" value="Eukaryota"/>
</dbReference>
<dbReference type="InParanoid" id="Q01059"/>
<dbReference type="OrthoDB" id="2279155at2759"/>
<dbReference type="EvolutionaryTrace" id="Q01059"/>
<dbReference type="Proteomes" id="UP000001811">
    <property type="component" value="Unplaced"/>
</dbReference>
<dbReference type="GO" id="GO:0005829">
    <property type="term" value="C:cytosol"/>
    <property type="evidence" value="ECO:0000250"/>
    <property type="project" value="UniProtKB"/>
</dbReference>
<dbReference type="GO" id="GO:0051539">
    <property type="term" value="F:4 iron, 4 sulfur cluster binding"/>
    <property type="evidence" value="ECO:0000250"/>
    <property type="project" value="UniProtKB"/>
</dbReference>
<dbReference type="GO" id="GO:0003994">
    <property type="term" value="F:aconitate hydratase activity"/>
    <property type="evidence" value="ECO:0000250"/>
    <property type="project" value="UniProtKB"/>
</dbReference>
<dbReference type="GO" id="GO:0030350">
    <property type="term" value="F:iron-responsive element binding"/>
    <property type="evidence" value="ECO:0000250"/>
    <property type="project" value="UniProtKB"/>
</dbReference>
<dbReference type="GO" id="GO:0046872">
    <property type="term" value="F:metal ion binding"/>
    <property type="evidence" value="ECO:0007669"/>
    <property type="project" value="UniProtKB-KW"/>
</dbReference>
<dbReference type="GO" id="GO:0006101">
    <property type="term" value="P:citrate metabolic process"/>
    <property type="evidence" value="ECO:0000250"/>
    <property type="project" value="UniProtKB"/>
</dbReference>
<dbReference type="GO" id="GO:0010040">
    <property type="term" value="P:response to iron(II) ion"/>
    <property type="evidence" value="ECO:0000250"/>
    <property type="project" value="UniProtKB"/>
</dbReference>
<dbReference type="GO" id="GO:0006099">
    <property type="term" value="P:tricarboxylic acid cycle"/>
    <property type="evidence" value="ECO:0007669"/>
    <property type="project" value="UniProtKB-KW"/>
</dbReference>
<dbReference type="CDD" id="cd01586">
    <property type="entry name" value="AcnA_IRP"/>
    <property type="match status" value="1"/>
</dbReference>
<dbReference type="CDD" id="cd01580">
    <property type="entry name" value="AcnA_IRP_Swivel"/>
    <property type="match status" value="1"/>
</dbReference>
<dbReference type="FunFam" id="3.30.499.10:FF:000002">
    <property type="entry name" value="Aconitate hydratase"/>
    <property type="match status" value="1"/>
</dbReference>
<dbReference type="FunFam" id="3.30.499.10:FF:000005">
    <property type="entry name" value="cytoplasmic aconitate hydratase"/>
    <property type="match status" value="1"/>
</dbReference>
<dbReference type="FunFam" id="3.20.19.10:FF:000005">
    <property type="entry name" value="Iron-responsive element-binding protein 2"/>
    <property type="match status" value="1"/>
</dbReference>
<dbReference type="Gene3D" id="6.10.190.10">
    <property type="match status" value="1"/>
</dbReference>
<dbReference type="Gene3D" id="3.30.499.10">
    <property type="entry name" value="Aconitase, domain 3"/>
    <property type="match status" value="2"/>
</dbReference>
<dbReference type="Gene3D" id="3.20.19.10">
    <property type="entry name" value="Aconitase, domain 4"/>
    <property type="match status" value="1"/>
</dbReference>
<dbReference type="InterPro" id="IPR044137">
    <property type="entry name" value="AcnA_IRP_Swivel"/>
</dbReference>
<dbReference type="InterPro" id="IPR015931">
    <property type="entry name" value="Acnase/IPM_dHydase_lsu_aba_1/3"/>
</dbReference>
<dbReference type="InterPro" id="IPR001030">
    <property type="entry name" value="Acoase/IPM_deHydtase_lsu_aba"/>
</dbReference>
<dbReference type="InterPro" id="IPR015928">
    <property type="entry name" value="Aconitase/3IPM_dehydase_swvl"/>
</dbReference>
<dbReference type="InterPro" id="IPR006249">
    <property type="entry name" value="Aconitase/IRP2"/>
</dbReference>
<dbReference type="InterPro" id="IPR018136">
    <property type="entry name" value="Aconitase_4Fe-4S_BS"/>
</dbReference>
<dbReference type="InterPro" id="IPR036008">
    <property type="entry name" value="Aconitase_4Fe-4S_dom"/>
</dbReference>
<dbReference type="InterPro" id="IPR000573">
    <property type="entry name" value="AconitaseA/IPMdHydase_ssu_swvl"/>
</dbReference>
<dbReference type="NCBIfam" id="TIGR01341">
    <property type="entry name" value="aconitase_1"/>
    <property type="match status" value="1"/>
</dbReference>
<dbReference type="NCBIfam" id="NF006757">
    <property type="entry name" value="PRK09277.1"/>
    <property type="match status" value="1"/>
</dbReference>
<dbReference type="NCBIfam" id="NF009520">
    <property type="entry name" value="PRK12881.1"/>
    <property type="match status" value="1"/>
</dbReference>
<dbReference type="PANTHER" id="PTHR11670">
    <property type="entry name" value="ACONITASE/IRON-RESPONSIVE ELEMENT FAMILY MEMBER"/>
    <property type="match status" value="1"/>
</dbReference>
<dbReference type="Pfam" id="PF00330">
    <property type="entry name" value="Aconitase"/>
    <property type="match status" value="1"/>
</dbReference>
<dbReference type="Pfam" id="PF00694">
    <property type="entry name" value="Aconitase_C"/>
    <property type="match status" value="1"/>
</dbReference>
<dbReference type="PRINTS" id="PR00415">
    <property type="entry name" value="ACONITASE"/>
</dbReference>
<dbReference type="SUPFAM" id="SSF53732">
    <property type="entry name" value="Aconitase iron-sulfur domain"/>
    <property type="match status" value="1"/>
</dbReference>
<dbReference type="SUPFAM" id="SSF52016">
    <property type="entry name" value="LeuD/IlvD-like"/>
    <property type="match status" value="1"/>
</dbReference>
<dbReference type="PROSITE" id="PS00450">
    <property type="entry name" value="ACONITASE_1"/>
    <property type="match status" value="1"/>
</dbReference>
<dbReference type="PROSITE" id="PS01244">
    <property type="entry name" value="ACONITASE_2"/>
    <property type="match status" value="1"/>
</dbReference>
<proteinExistence type="evidence at protein level"/>
<accession>Q01059</accession>
<keyword id="KW-0002">3D-structure</keyword>
<keyword id="KW-0004">4Fe-4S</keyword>
<keyword id="KW-0963">Cytoplasm</keyword>
<keyword id="KW-0903">Direct protein sequencing</keyword>
<keyword id="KW-0408">Iron</keyword>
<keyword id="KW-0411">Iron-sulfur</keyword>
<keyword id="KW-0456">Lyase</keyword>
<keyword id="KW-0479">Metal-binding</keyword>
<keyword id="KW-1185">Reference proteome</keyword>
<keyword id="KW-0694">RNA-binding</keyword>
<keyword id="KW-0816">Tricarboxylic acid cycle</keyword>
<name>ACOHC_RABIT</name>
<reference key="1">
    <citation type="journal article" date="1992" name="J. Biol. Chem.">
        <title>Cloning of a functional cDNA for the rabbit ferritin mRNA repressor protein. Demonstration of a tissue-specific pattern of expression.</title>
        <authorList>
            <person name="Patino M.M."/>
            <person name="Walden W.E."/>
        </authorList>
    </citation>
    <scope>NUCLEOTIDE SEQUENCE [MRNA]</scope>
    <scope>PARTIAL PROTEIN SEQUENCE</scope>
    <source>
        <tissue>Liver</tissue>
    </source>
</reference>
<reference key="2">
    <citation type="journal article" date="1994" name="Nucleic Acids Res.">
        <title>Localization of an RNA binding element of the iron responsive element binding protein within a proteolytic fragment containing iron coordination ligands.</title>
        <authorList>
            <person name="Swenson G.R."/>
            <person name="Walden W.E."/>
        </authorList>
    </citation>
    <scope>PROTEIN SEQUENCE OF 133-146 AND 624-638</scope>
</reference>
<reference key="3">
    <citation type="journal article" date="2006" name="Science">
        <title>Structure of dual function iron regulatory protein 1 complexed with ferritin IRE-RNA.</title>
        <authorList>
            <person name="Walden W.E."/>
            <person name="Selezneva A.I."/>
            <person name="Dupuy J."/>
            <person name="Volbeda A."/>
            <person name="Fontecilla-Camps J.C."/>
            <person name="Theil E.C."/>
            <person name="Volz K."/>
        </authorList>
    </citation>
    <scope>X-RAY CRYSTALLOGRAPHY (2.8 ANGSTROMS) IN COMPLEX WITH TARGET MRNA</scope>
    <scope>RNA-BINDING</scope>
    <scope>FUNCTION</scope>
</reference>